<feature type="chain" id="PRO_0000198852" description="DNA repair endonuclease XPF">
    <location>
        <begin position="1"/>
        <end position="913"/>
    </location>
</feature>
<feature type="domain" description="ERCC4">
    <location>
        <begin position="680"/>
        <end position="760"/>
    </location>
</feature>
<feature type="region of interest" description="Helicase-like" evidence="1">
    <location>
        <begin position="1"/>
        <end position="454"/>
    </location>
</feature>
<feature type="region of interest" description="Leucine-zipper 1" evidence="1">
    <location>
        <begin position="233"/>
        <end position="254"/>
    </location>
</feature>
<feature type="region of interest" description="Leucine-zipper 2" evidence="1">
    <location>
        <begin position="270"/>
        <end position="298"/>
    </location>
</feature>
<feature type="region of interest" description="Disordered" evidence="4">
    <location>
        <begin position="453"/>
        <end position="525"/>
    </location>
</feature>
<feature type="region of interest" description="Disordered" evidence="4">
    <location>
        <begin position="638"/>
        <end position="677"/>
    </location>
</feature>
<feature type="region of interest" description="Nuclease" evidence="1">
    <location>
        <begin position="655"/>
        <end position="810"/>
    </location>
</feature>
<feature type="region of interest" description="HhH2, dimerization with ERCC1" evidence="1">
    <location>
        <begin position="834"/>
        <end position="902"/>
    </location>
</feature>
<feature type="short sequence motif" description="Nuclear localization signal" evidence="3">
    <location>
        <begin position="483"/>
        <end position="488"/>
    </location>
</feature>
<feature type="compositionally biased region" description="Basic and acidic residues" evidence="4">
    <location>
        <begin position="453"/>
        <end position="476"/>
    </location>
</feature>
<feature type="compositionally biased region" description="Acidic residues" evidence="4">
    <location>
        <begin position="500"/>
        <end position="509"/>
    </location>
</feature>
<feature type="compositionally biased region" description="Basic and acidic residues" evidence="4">
    <location>
        <begin position="638"/>
        <end position="649"/>
    </location>
</feature>
<feature type="modified residue" description="N6-acetyllysine" evidence="1">
    <location>
        <position position="289"/>
    </location>
</feature>
<feature type="modified residue" description="Phosphoserine" evidence="2">
    <location>
        <position position="518"/>
    </location>
</feature>
<proteinExistence type="evidence at transcript level"/>
<name>XPF_CRIGR</name>
<evidence type="ECO:0000250" key="1">
    <source>
        <dbReference type="UniProtKB" id="Q92889"/>
    </source>
</evidence>
<evidence type="ECO:0000250" key="2">
    <source>
        <dbReference type="UniProtKB" id="Q9QZD4"/>
    </source>
</evidence>
<evidence type="ECO:0000255" key="3"/>
<evidence type="ECO:0000256" key="4">
    <source>
        <dbReference type="SAM" id="MobiDB-lite"/>
    </source>
</evidence>
<evidence type="ECO:0000303" key="5">
    <source ref="1"/>
</evidence>
<evidence type="ECO:0000305" key="6"/>
<gene>
    <name evidence="5" type="primary">ERCC4</name>
</gene>
<comment type="function">
    <text evidence="1">Catalytic component of a structure-specific DNA repair endonuclease responsible for the 5-prime incision during DNA repair, and which is essential for nucleotide excision repair (NER) and interstrand cross-link (ICL) repair.</text>
</comment>
<comment type="cofactor">
    <cofactor evidence="1">
        <name>Mg(2+)</name>
        <dbReference type="ChEBI" id="CHEBI:18420"/>
    </cofactor>
</comment>
<comment type="subunit">
    <text evidence="1">Heterodimer composed of ERCC1 and ERCC4/XPF. Interacts with SLX4/BTBD12; this interaction is direct and links the ERCC1-ERCC4/XPF complex to SLX4, which may coordinate the action of the structure-specific endonuclease during DNA repair.</text>
</comment>
<comment type="subcellular location">
    <subcellularLocation>
        <location evidence="1">Nucleus</location>
    </subcellularLocation>
    <subcellularLocation>
        <location evidence="1">Chromosome</location>
    </subcellularLocation>
    <text evidence="1">Localizes to sites of DNA damage.</text>
</comment>
<comment type="similarity">
    <text evidence="6">Belongs to the XPF family.</text>
</comment>
<protein>
    <recommendedName>
        <fullName>DNA repair endonuclease XPF</fullName>
        <ecNumber evidence="1">3.1.-.-</ecNumber>
    </recommendedName>
    <alternativeName>
        <fullName>DNA excision repair protein ERCC-4</fullName>
    </alternativeName>
</protein>
<reference key="1">
    <citation type="submission" date="1998-09" db="EMBL/GenBank/DDBJ databases">
        <title>CHO ERCC4 cDNA.</title>
        <authorList>
            <person name="Hayashi T."/>
        </authorList>
    </citation>
    <scope>NUCLEOTIDE SEQUENCE [MRNA]</scope>
</reference>
<accession>Q9QYM7</accession>
<sequence length="913" mass="103187">MDRGISAVRKAMAPLLEYERQLVLELLDSDGLVVCARGLGADRLLYHFLRLHCHPACLVLVLNTQPAEEEYFINQLKIEGVEHLPRRVTNEITSNSRYEVYTQGGIIFATSRILVVDFLTDRIPSDLITGILVYRAHRIIESCQEAFILRLFRQKNKRGFIKAFTDNAVAFDTGFCHVERVMRNLFVRKLYLWPRFHVAVNSFLEQHKPEVVEIHVSMTPAMLSIQTAILDILNACLKELKCHNPSLEVEDLSLENALGKPFDKTIRHYLDPLWHQLGAKTKSLVQDLKILRTLLQYLSQYDCVTFLNLLESLRATEKVFGQNSGWLFLDASTSMFVNARARVYRVPDVKLNKKAKMSESAEGQETKKELVLESNPKWEALSEVLKEIEAENKESEALGGPGQVLICASDDRTCCQLRDYLTAGAEAFLLRLYRKTFEKDSKAEEVWVNLRKGDGPKRTMKSDKRPKDTKNKERASTKKGAPKRKKRELTLTQVMGTAEEPPEEGAAEEDQQRQATSSPEGCGGEIQHEAFDLNLSSDSAYGILKEPLTIIHPLVGCSDPYALTRVLHEVEPRYVVLYDAELTFVRQLEIYRASRPGKPLRVYFLIYGGSTEEQRYLTALRKEKEAFEKLIREKASMVVPEEREGRDETNLDLARGTVSTDAPADTRKAGGQEHNGTQPSIVVDMREFRSELPSLIHRRGIDIEPVTLEVGDYILTPELCVERKSVSDLIGSLNSGRLYSQCLAMSRYYRRPVLLIEFDAGKPFSLAPRGSFFQEMSSSDVSSKLTLLTLHFPRLRLLWCPSPHATAELFEELKQNKPQPDAATAMAITADSETLPESDKYNPGPQDFVLKMPGINAKNCHSLMNHVKNIAELASLSQERLTSILGHAGNAKQLYDFLHTAYADVVSGGRVRK</sequence>
<keyword id="KW-0007">Acetylation</keyword>
<keyword id="KW-0158">Chromosome</keyword>
<keyword id="KW-0227">DNA damage</keyword>
<keyword id="KW-0234">DNA repair</keyword>
<keyword id="KW-0238">DNA-binding</keyword>
<keyword id="KW-0255">Endonuclease</keyword>
<keyword id="KW-0378">Hydrolase</keyword>
<keyword id="KW-0460">Magnesium</keyword>
<keyword id="KW-0540">Nuclease</keyword>
<keyword id="KW-0539">Nucleus</keyword>
<keyword id="KW-0597">Phosphoprotein</keyword>
<keyword id="KW-0677">Repeat</keyword>
<organism>
    <name type="scientific">Cricetulus griseus</name>
    <name type="common">Chinese hamster</name>
    <name type="synonym">Cricetulus barabensis griseus</name>
    <dbReference type="NCBI Taxonomy" id="10029"/>
    <lineage>
        <taxon>Eukaryota</taxon>
        <taxon>Metazoa</taxon>
        <taxon>Chordata</taxon>
        <taxon>Craniata</taxon>
        <taxon>Vertebrata</taxon>
        <taxon>Euteleostomi</taxon>
        <taxon>Mammalia</taxon>
        <taxon>Eutheria</taxon>
        <taxon>Euarchontoglires</taxon>
        <taxon>Glires</taxon>
        <taxon>Rodentia</taxon>
        <taxon>Myomorpha</taxon>
        <taxon>Muroidea</taxon>
        <taxon>Cricetidae</taxon>
        <taxon>Cricetinae</taxon>
        <taxon>Cricetulus</taxon>
    </lineage>
</organism>
<dbReference type="EC" id="3.1.-.-" evidence="1"/>
<dbReference type="EMBL" id="AB017635">
    <property type="protein sequence ID" value="BAA89229.1"/>
    <property type="molecule type" value="mRNA"/>
</dbReference>
<dbReference type="RefSeq" id="NP_001230961.1">
    <property type="nucleotide sequence ID" value="NM_001244032.1"/>
</dbReference>
<dbReference type="SMR" id="Q9QYM7"/>
<dbReference type="CORUM" id="Q9QYM7"/>
<dbReference type="PaxDb" id="10029-NP_001230961.1"/>
<dbReference type="Ensembl" id="ENSCGRT00001004392.1">
    <property type="protein sequence ID" value="ENSCGRP00001003112.1"/>
    <property type="gene ID" value="ENSCGRG00001003669.1"/>
</dbReference>
<dbReference type="GeneID" id="100689044"/>
<dbReference type="KEGG" id="cge:100689044"/>
<dbReference type="CTD" id="2072"/>
<dbReference type="eggNOG" id="KOG0442">
    <property type="taxonomic scope" value="Eukaryota"/>
</dbReference>
<dbReference type="GeneTree" id="ENSGT00390000004394"/>
<dbReference type="OrthoDB" id="361020at2759"/>
<dbReference type="Proteomes" id="UP000694386">
    <property type="component" value="Unplaced"/>
</dbReference>
<dbReference type="Proteomes" id="UP001108280">
    <property type="component" value="Chromosome 7"/>
</dbReference>
<dbReference type="GO" id="GO:0000781">
    <property type="term" value="C:chromosome, telomeric region"/>
    <property type="evidence" value="ECO:0000250"/>
    <property type="project" value="UniProtKB"/>
</dbReference>
<dbReference type="GO" id="GO:0070522">
    <property type="term" value="C:ERCC4-ERCC1 complex"/>
    <property type="evidence" value="ECO:0000250"/>
    <property type="project" value="UniProtKB"/>
</dbReference>
<dbReference type="GO" id="GO:0000110">
    <property type="term" value="C:nucleotide-excision repair factor 1 complex"/>
    <property type="evidence" value="ECO:0000250"/>
    <property type="project" value="UniProtKB"/>
</dbReference>
<dbReference type="GO" id="GO:0005634">
    <property type="term" value="C:nucleus"/>
    <property type="evidence" value="ECO:0000250"/>
    <property type="project" value="UniProtKB"/>
</dbReference>
<dbReference type="GO" id="GO:1990599">
    <property type="term" value="F:3' overhang single-stranded DNA endodeoxyribonuclease activity"/>
    <property type="evidence" value="ECO:0007669"/>
    <property type="project" value="Ensembl"/>
</dbReference>
<dbReference type="GO" id="GO:0003684">
    <property type="term" value="F:damaged DNA binding"/>
    <property type="evidence" value="ECO:0000250"/>
    <property type="project" value="UniProtKB"/>
</dbReference>
<dbReference type="GO" id="GO:0042802">
    <property type="term" value="F:identical protein binding"/>
    <property type="evidence" value="ECO:0007669"/>
    <property type="project" value="Ensembl"/>
</dbReference>
<dbReference type="GO" id="GO:1990841">
    <property type="term" value="F:promoter-specific chromatin binding"/>
    <property type="evidence" value="ECO:0007669"/>
    <property type="project" value="Ensembl"/>
</dbReference>
<dbReference type="GO" id="GO:0003697">
    <property type="term" value="F:single-stranded DNA binding"/>
    <property type="evidence" value="ECO:0000250"/>
    <property type="project" value="UniProtKB"/>
</dbReference>
<dbReference type="GO" id="GO:0001094">
    <property type="term" value="F:TFIID-class transcription factor complex binding"/>
    <property type="evidence" value="ECO:0007669"/>
    <property type="project" value="Ensembl"/>
</dbReference>
<dbReference type="GO" id="GO:0034644">
    <property type="term" value="P:cellular response to UV"/>
    <property type="evidence" value="ECO:0000250"/>
    <property type="project" value="UniProtKB"/>
</dbReference>
<dbReference type="GO" id="GO:0000724">
    <property type="term" value="P:double-strand break repair via homologous recombination"/>
    <property type="evidence" value="ECO:0000250"/>
    <property type="project" value="UniProtKB"/>
</dbReference>
<dbReference type="GO" id="GO:0006303">
    <property type="term" value="P:double-strand break repair via nonhomologous end joining"/>
    <property type="evidence" value="ECO:0007669"/>
    <property type="project" value="Ensembl"/>
</dbReference>
<dbReference type="GO" id="GO:1905765">
    <property type="term" value="P:negative regulation of protection from non-homologous end joining at telomere"/>
    <property type="evidence" value="ECO:0007669"/>
    <property type="project" value="Ensembl"/>
</dbReference>
<dbReference type="GO" id="GO:0032205">
    <property type="term" value="P:negative regulation of telomere maintenance"/>
    <property type="evidence" value="ECO:0000250"/>
    <property type="project" value="UniProtKB"/>
</dbReference>
<dbReference type="GO" id="GO:1904357">
    <property type="term" value="P:negative regulation of telomere maintenance via telomere lengthening"/>
    <property type="evidence" value="ECO:0007669"/>
    <property type="project" value="Ensembl"/>
</dbReference>
<dbReference type="GO" id="GO:0006289">
    <property type="term" value="P:nucleotide-excision repair"/>
    <property type="evidence" value="ECO:0000250"/>
    <property type="project" value="UniProtKB"/>
</dbReference>
<dbReference type="GO" id="GO:1901255">
    <property type="term" value="P:nucleotide-excision repair involved in interstrand cross-link repair"/>
    <property type="evidence" value="ECO:0000250"/>
    <property type="project" value="UniProtKB"/>
</dbReference>
<dbReference type="GO" id="GO:0010506">
    <property type="term" value="P:regulation of autophagy"/>
    <property type="evidence" value="ECO:0007669"/>
    <property type="project" value="Ensembl"/>
</dbReference>
<dbReference type="GO" id="GO:0000712">
    <property type="term" value="P:resolution of meiotic recombination intermediates"/>
    <property type="evidence" value="ECO:0007669"/>
    <property type="project" value="TreeGrafter"/>
</dbReference>
<dbReference type="GO" id="GO:0009411">
    <property type="term" value="P:response to UV"/>
    <property type="evidence" value="ECO:0000250"/>
    <property type="project" value="UniProtKB"/>
</dbReference>
<dbReference type="GO" id="GO:0061819">
    <property type="term" value="P:telomeric DNA-containing double minutes formation"/>
    <property type="evidence" value="ECO:0007669"/>
    <property type="project" value="Ensembl"/>
</dbReference>
<dbReference type="GO" id="GO:0009650">
    <property type="term" value="P:UV protection"/>
    <property type="evidence" value="ECO:0007669"/>
    <property type="project" value="Ensembl"/>
</dbReference>
<dbReference type="CDD" id="cd20078">
    <property type="entry name" value="XPF_nuclease_XPF_euk"/>
    <property type="match status" value="1"/>
</dbReference>
<dbReference type="FunFam" id="3.40.50.10130:FF:000002">
    <property type="entry name" value="DNA repair endonuclease XPF"/>
    <property type="match status" value="1"/>
</dbReference>
<dbReference type="FunFam" id="1.10.150.20:FF:000040">
    <property type="entry name" value="DNA repair endonuclease XPF isoform X2"/>
    <property type="match status" value="1"/>
</dbReference>
<dbReference type="Gene3D" id="3.40.50.10130">
    <property type="match status" value="1"/>
</dbReference>
<dbReference type="Gene3D" id="1.10.150.20">
    <property type="entry name" value="5' to 3' exonuclease, C-terminal subdomain"/>
    <property type="match status" value="1"/>
</dbReference>
<dbReference type="InterPro" id="IPR006166">
    <property type="entry name" value="ERCC4_domain"/>
</dbReference>
<dbReference type="InterPro" id="IPR011335">
    <property type="entry name" value="Restrct_endonuc-II-like"/>
</dbReference>
<dbReference type="InterPro" id="IPR010994">
    <property type="entry name" value="RuvA_2-like"/>
</dbReference>
<dbReference type="InterPro" id="IPR006167">
    <property type="entry name" value="XPF"/>
</dbReference>
<dbReference type="InterPro" id="IPR047520">
    <property type="entry name" value="XPF_nuclease"/>
</dbReference>
<dbReference type="NCBIfam" id="TIGR00596">
    <property type="entry name" value="rad1"/>
    <property type="match status" value="1"/>
</dbReference>
<dbReference type="PANTHER" id="PTHR10150">
    <property type="entry name" value="DNA REPAIR ENDONUCLEASE XPF"/>
    <property type="match status" value="1"/>
</dbReference>
<dbReference type="PANTHER" id="PTHR10150:SF0">
    <property type="entry name" value="DNA REPAIR ENDONUCLEASE XPF"/>
    <property type="match status" value="1"/>
</dbReference>
<dbReference type="Pfam" id="PF02732">
    <property type="entry name" value="ERCC4"/>
    <property type="match status" value="1"/>
</dbReference>
<dbReference type="SMART" id="SM00891">
    <property type="entry name" value="ERCC4"/>
    <property type="match status" value="1"/>
</dbReference>
<dbReference type="SUPFAM" id="SSF52980">
    <property type="entry name" value="Restriction endonuclease-like"/>
    <property type="match status" value="1"/>
</dbReference>
<dbReference type="SUPFAM" id="SSF47781">
    <property type="entry name" value="RuvA domain 2-like"/>
    <property type="match status" value="1"/>
</dbReference>